<accession>Q04L76</accession>
<sequence>MSIHIAAQQGEIADKILLPGDPLRAKFIAENFLGDAVCFNEVRNMFGYTGTYKGHRVSVMGTGMGMPSISIYARELIVDYGVKKLIRVGTAGSLNEEVHVRELVLAQAAATNSNIVRNDWPQYDFPQIASFDLLDKAYHIAKELGMTTHVGNVLSSDVFYSNYFEKNIELGKWGVKAVEMEAAALYYLAAQYHVDALAIMTISDSLVNPDEDTTAEERQNTFTDMMKVGLETLIAE</sequence>
<name>DEOD_STRP2</name>
<reference key="1">
    <citation type="journal article" date="2007" name="J. Bacteriol.">
        <title>Genome sequence of Avery's virulent serotype 2 strain D39 of Streptococcus pneumoniae and comparison with that of unencapsulated laboratory strain R6.</title>
        <authorList>
            <person name="Lanie J.A."/>
            <person name="Ng W.-L."/>
            <person name="Kazmierczak K.M."/>
            <person name="Andrzejewski T.M."/>
            <person name="Davidsen T.M."/>
            <person name="Wayne K.J."/>
            <person name="Tettelin H."/>
            <person name="Glass J.I."/>
            <person name="Winkler M.E."/>
        </authorList>
    </citation>
    <scope>NUCLEOTIDE SEQUENCE [LARGE SCALE GENOMIC DNA]</scope>
    <source>
        <strain>D39 / NCTC 7466</strain>
    </source>
</reference>
<organism>
    <name type="scientific">Streptococcus pneumoniae serotype 2 (strain D39 / NCTC 7466)</name>
    <dbReference type="NCBI Taxonomy" id="373153"/>
    <lineage>
        <taxon>Bacteria</taxon>
        <taxon>Bacillati</taxon>
        <taxon>Bacillota</taxon>
        <taxon>Bacilli</taxon>
        <taxon>Lactobacillales</taxon>
        <taxon>Streptococcaceae</taxon>
        <taxon>Streptococcus</taxon>
    </lineage>
</organism>
<evidence type="ECO:0000250" key="1">
    <source>
        <dbReference type="UniProtKB" id="P50389"/>
    </source>
</evidence>
<evidence type="ECO:0000255" key="2">
    <source>
        <dbReference type="HAMAP-Rule" id="MF_01627"/>
    </source>
</evidence>
<protein>
    <recommendedName>
        <fullName evidence="2">Purine nucleoside phosphorylase DeoD-type</fullName>
        <shortName evidence="2">PNP</shortName>
        <ecNumber evidence="2">2.4.2.1</ecNumber>
    </recommendedName>
</protein>
<keyword id="KW-0328">Glycosyltransferase</keyword>
<keyword id="KW-1185">Reference proteome</keyword>
<keyword id="KW-0808">Transferase</keyword>
<proteinExistence type="inferred from homology"/>
<feature type="chain" id="PRO_1000186225" description="Purine nucleoside phosphorylase DeoD-type">
    <location>
        <begin position="1"/>
        <end position="236"/>
    </location>
</feature>
<feature type="active site" description="Proton donor" evidence="2">
    <location>
        <position position="204"/>
    </location>
</feature>
<feature type="binding site" evidence="1">
    <location>
        <position position="4"/>
    </location>
    <ligand>
        <name>a purine D-ribonucleoside</name>
        <dbReference type="ChEBI" id="CHEBI:142355"/>
        <note>ligand shared between dimeric partners</note>
    </ligand>
</feature>
<feature type="binding site" description="in other chain" evidence="1">
    <location>
        <position position="20"/>
    </location>
    <ligand>
        <name>phosphate</name>
        <dbReference type="ChEBI" id="CHEBI:43474"/>
        <note>ligand shared between dimeric partners</note>
    </ligand>
</feature>
<feature type="binding site" description="in other chain" evidence="1">
    <location>
        <position position="24"/>
    </location>
    <ligand>
        <name>phosphate</name>
        <dbReference type="ChEBI" id="CHEBI:43474"/>
        <note>ligand shared between dimeric partners</note>
    </ligand>
</feature>
<feature type="binding site" evidence="1">
    <location>
        <position position="43"/>
    </location>
    <ligand>
        <name>phosphate</name>
        <dbReference type="ChEBI" id="CHEBI:43474"/>
        <note>ligand shared between dimeric partners</note>
    </ligand>
</feature>
<feature type="binding site" description="in other chain" evidence="1">
    <location>
        <begin position="87"/>
        <end position="90"/>
    </location>
    <ligand>
        <name>phosphate</name>
        <dbReference type="ChEBI" id="CHEBI:43474"/>
        <note>ligand shared between dimeric partners</note>
    </ligand>
</feature>
<feature type="binding site" description="in other chain" evidence="1">
    <location>
        <begin position="179"/>
        <end position="181"/>
    </location>
    <ligand>
        <name>a purine D-ribonucleoside</name>
        <dbReference type="ChEBI" id="CHEBI:142355"/>
        <note>ligand shared between dimeric partners</note>
    </ligand>
</feature>
<feature type="binding site" description="in other chain" evidence="1">
    <location>
        <begin position="203"/>
        <end position="204"/>
    </location>
    <ligand>
        <name>a purine D-ribonucleoside</name>
        <dbReference type="ChEBI" id="CHEBI:142355"/>
        <note>ligand shared between dimeric partners</note>
    </ligand>
</feature>
<feature type="site" description="Important for catalytic activity" evidence="2">
    <location>
        <position position="218"/>
    </location>
</feature>
<gene>
    <name evidence="2" type="primary">deoD</name>
    <name type="ordered locus">SPD_0730</name>
</gene>
<comment type="function">
    <text evidence="2">Catalyzes the reversible phosphorolytic breakdown of the N-glycosidic bond in the beta-(deoxy)ribonucleoside molecules, with the formation of the corresponding free purine bases and pentose-1-phosphate.</text>
</comment>
<comment type="catalytic activity">
    <reaction evidence="2">
        <text>a purine D-ribonucleoside + phosphate = a purine nucleobase + alpha-D-ribose 1-phosphate</text>
        <dbReference type="Rhea" id="RHEA:19805"/>
        <dbReference type="ChEBI" id="CHEBI:26386"/>
        <dbReference type="ChEBI" id="CHEBI:43474"/>
        <dbReference type="ChEBI" id="CHEBI:57720"/>
        <dbReference type="ChEBI" id="CHEBI:142355"/>
        <dbReference type="EC" id="2.4.2.1"/>
    </reaction>
</comment>
<comment type="catalytic activity">
    <reaction evidence="2">
        <text>a purine 2'-deoxy-D-ribonucleoside + phosphate = a purine nucleobase + 2-deoxy-alpha-D-ribose 1-phosphate</text>
        <dbReference type="Rhea" id="RHEA:36431"/>
        <dbReference type="ChEBI" id="CHEBI:26386"/>
        <dbReference type="ChEBI" id="CHEBI:43474"/>
        <dbReference type="ChEBI" id="CHEBI:57259"/>
        <dbReference type="ChEBI" id="CHEBI:142361"/>
        <dbReference type="EC" id="2.4.2.1"/>
    </reaction>
</comment>
<comment type="subunit">
    <text evidence="2">Homohexamer; trimer of homodimers.</text>
</comment>
<comment type="similarity">
    <text evidence="2">Belongs to the PNP/UDP phosphorylase family.</text>
</comment>
<dbReference type="EC" id="2.4.2.1" evidence="2"/>
<dbReference type="EMBL" id="CP000410">
    <property type="protein sequence ID" value="ABJ53917.1"/>
    <property type="molecule type" value="Genomic_DNA"/>
</dbReference>
<dbReference type="RefSeq" id="WP_000022100.1">
    <property type="nucleotide sequence ID" value="NZ_JAMLJR010000018.1"/>
</dbReference>
<dbReference type="SMR" id="Q04L76"/>
<dbReference type="PaxDb" id="373153-SPD_0730"/>
<dbReference type="GeneID" id="45653806"/>
<dbReference type="KEGG" id="spd:SPD_0730"/>
<dbReference type="eggNOG" id="COG0813">
    <property type="taxonomic scope" value="Bacteria"/>
</dbReference>
<dbReference type="HOGENOM" id="CLU_068457_2_0_9"/>
<dbReference type="BioCyc" id="SPNE373153:G1G6V-803-MONOMER"/>
<dbReference type="Proteomes" id="UP000001452">
    <property type="component" value="Chromosome"/>
</dbReference>
<dbReference type="GO" id="GO:0005829">
    <property type="term" value="C:cytosol"/>
    <property type="evidence" value="ECO:0007669"/>
    <property type="project" value="TreeGrafter"/>
</dbReference>
<dbReference type="GO" id="GO:0004731">
    <property type="term" value="F:purine-nucleoside phosphorylase activity"/>
    <property type="evidence" value="ECO:0007669"/>
    <property type="project" value="UniProtKB-UniRule"/>
</dbReference>
<dbReference type="GO" id="GO:0006152">
    <property type="term" value="P:purine nucleoside catabolic process"/>
    <property type="evidence" value="ECO:0007669"/>
    <property type="project" value="TreeGrafter"/>
</dbReference>
<dbReference type="CDD" id="cd09006">
    <property type="entry name" value="PNP_EcPNPI-like"/>
    <property type="match status" value="1"/>
</dbReference>
<dbReference type="Gene3D" id="3.40.50.1580">
    <property type="entry name" value="Nucleoside phosphorylase domain"/>
    <property type="match status" value="1"/>
</dbReference>
<dbReference type="HAMAP" id="MF_01627">
    <property type="entry name" value="Pur_nucleosid_phosp"/>
    <property type="match status" value="1"/>
</dbReference>
<dbReference type="InterPro" id="IPR004402">
    <property type="entry name" value="DeoD-type"/>
</dbReference>
<dbReference type="InterPro" id="IPR018016">
    <property type="entry name" value="Nucleoside_phosphorylase_CS"/>
</dbReference>
<dbReference type="InterPro" id="IPR000845">
    <property type="entry name" value="Nucleoside_phosphorylase_d"/>
</dbReference>
<dbReference type="InterPro" id="IPR035994">
    <property type="entry name" value="Nucleoside_phosphorylase_sf"/>
</dbReference>
<dbReference type="NCBIfam" id="TIGR00107">
    <property type="entry name" value="deoD"/>
    <property type="match status" value="1"/>
</dbReference>
<dbReference type="NCBIfam" id="NF004489">
    <property type="entry name" value="PRK05819.1"/>
    <property type="match status" value="1"/>
</dbReference>
<dbReference type="PANTHER" id="PTHR43691:SF11">
    <property type="entry name" value="FI09636P-RELATED"/>
    <property type="match status" value="1"/>
</dbReference>
<dbReference type="PANTHER" id="PTHR43691">
    <property type="entry name" value="URIDINE PHOSPHORYLASE"/>
    <property type="match status" value="1"/>
</dbReference>
<dbReference type="Pfam" id="PF01048">
    <property type="entry name" value="PNP_UDP_1"/>
    <property type="match status" value="1"/>
</dbReference>
<dbReference type="SUPFAM" id="SSF53167">
    <property type="entry name" value="Purine and uridine phosphorylases"/>
    <property type="match status" value="1"/>
</dbReference>
<dbReference type="PROSITE" id="PS01232">
    <property type="entry name" value="PNP_UDP_1"/>
    <property type="match status" value="1"/>
</dbReference>